<accession>B3PPP3</accession>
<evidence type="ECO:0000255" key="1">
    <source>
        <dbReference type="HAMAP-Rule" id="MF_00783"/>
    </source>
</evidence>
<name>FLBT_RHIE6</name>
<feature type="chain" id="PRO_1000133722" description="Probable flagellum biosynthesis repressor protein FlbT">
    <location>
        <begin position="1"/>
        <end position="149"/>
    </location>
</feature>
<proteinExistence type="inferred from homology"/>
<keyword id="KW-1005">Bacterial flagellum biogenesis</keyword>
<keyword id="KW-0678">Repressor</keyword>
<keyword id="KW-0694">RNA-binding</keyword>
<reference key="1">
    <citation type="journal article" date="2010" name="Appl. Environ. Microbiol.">
        <title>Conserved symbiotic plasmid DNA sequences in the multireplicon pangenomic structure of Rhizobium etli.</title>
        <authorList>
            <person name="Gonzalez V."/>
            <person name="Acosta J.L."/>
            <person name="Santamaria R.I."/>
            <person name="Bustos P."/>
            <person name="Fernandez J.L."/>
            <person name="Hernandez Gonzalez I.L."/>
            <person name="Diaz R."/>
            <person name="Flores M."/>
            <person name="Palacios R."/>
            <person name="Mora J."/>
            <person name="Davila G."/>
        </authorList>
    </citation>
    <scope>NUCLEOTIDE SEQUENCE [LARGE SCALE GENOMIC DNA]</scope>
    <source>
        <strain>CIAT 652</strain>
    </source>
</reference>
<sequence length="149" mass="17032">MKSTLRISLKAGERIFINGAVLRVDRKVALEFLNDVTFLLENHVLQPEGATTPLRQLYFIAQMILINPEGKDHSTAMFRKSITMLLTCFKNEEILAELKRIDALVSTGRAFDALKAIRGLYAIEDNILNNHELPPTMVEQIRREIAPWR</sequence>
<dbReference type="EMBL" id="CP001074">
    <property type="protein sequence ID" value="ACE89750.1"/>
    <property type="molecule type" value="Genomic_DNA"/>
</dbReference>
<dbReference type="KEGG" id="rec:RHECIAT_CH0000761"/>
<dbReference type="eggNOG" id="COG5443">
    <property type="taxonomic scope" value="Bacteria"/>
</dbReference>
<dbReference type="HOGENOM" id="CLU_130913_1_0_5"/>
<dbReference type="Proteomes" id="UP000008817">
    <property type="component" value="Chromosome"/>
</dbReference>
<dbReference type="GO" id="GO:0048027">
    <property type="term" value="F:mRNA 5'-UTR binding"/>
    <property type="evidence" value="ECO:0007669"/>
    <property type="project" value="UniProtKB-UniRule"/>
</dbReference>
<dbReference type="GO" id="GO:0044781">
    <property type="term" value="P:bacterial-type flagellum organization"/>
    <property type="evidence" value="ECO:0007669"/>
    <property type="project" value="UniProtKB-KW"/>
</dbReference>
<dbReference type="GO" id="GO:0006402">
    <property type="term" value="P:mRNA catabolic process"/>
    <property type="evidence" value="ECO:0007669"/>
    <property type="project" value="InterPro"/>
</dbReference>
<dbReference type="GO" id="GO:1902209">
    <property type="term" value="P:negative regulation of bacterial-type flagellum assembly"/>
    <property type="evidence" value="ECO:0007669"/>
    <property type="project" value="UniProtKB-UniRule"/>
</dbReference>
<dbReference type="HAMAP" id="MF_00783">
    <property type="entry name" value="FlbT"/>
    <property type="match status" value="1"/>
</dbReference>
<dbReference type="InterPro" id="IPR009967">
    <property type="entry name" value="Flagellum_FlbT"/>
</dbReference>
<dbReference type="NCBIfam" id="NF001995">
    <property type="entry name" value="PRK00794.1-1"/>
    <property type="match status" value="1"/>
</dbReference>
<dbReference type="Pfam" id="PF07378">
    <property type="entry name" value="FlbT"/>
    <property type="match status" value="1"/>
</dbReference>
<dbReference type="PIRSF" id="PIRSF009533">
    <property type="entry name" value="FlbT"/>
    <property type="match status" value="1"/>
</dbReference>
<comment type="function">
    <text evidence="1">Has a post-transcriptional repressor function in flagellum biogenesis. Associates with the 5'-UTR of fljK mRNA and promotes its degradation.</text>
</comment>
<comment type="similarity">
    <text evidence="1">Belongs to the FlbT family.</text>
</comment>
<gene>
    <name evidence="1" type="primary">flbT</name>
    <name type="ordered locus">RHECIAT_CH0000761</name>
</gene>
<protein>
    <recommendedName>
        <fullName evidence="1">Probable flagellum biosynthesis repressor protein FlbT</fullName>
    </recommendedName>
</protein>
<organism>
    <name type="scientific">Rhizobium etli (strain CIAT 652)</name>
    <dbReference type="NCBI Taxonomy" id="491916"/>
    <lineage>
        <taxon>Bacteria</taxon>
        <taxon>Pseudomonadati</taxon>
        <taxon>Pseudomonadota</taxon>
        <taxon>Alphaproteobacteria</taxon>
        <taxon>Hyphomicrobiales</taxon>
        <taxon>Rhizobiaceae</taxon>
        <taxon>Rhizobium/Agrobacterium group</taxon>
        <taxon>Rhizobium</taxon>
    </lineage>
</organism>